<feature type="chain" id="PRO_1000055469" description="Large ribosomal subunit protein uL13">
    <location>
        <begin position="1"/>
        <end position="142"/>
    </location>
</feature>
<dbReference type="EMBL" id="CP000681">
    <property type="protein sequence ID" value="ABP74474.1"/>
    <property type="molecule type" value="Genomic_DNA"/>
</dbReference>
<dbReference type="SMR" id="A4Y3E1"/>
<dbReference type="STRING" id="319224.Sputcn32_0744"/>
<dbReference type="KEGG" id="spc:Sputcn32_0744"/>
<dbReference type="eggNOG" id="COG0102">
    <property type="taxonomic scope" value="Bacteria"/>
</dbReference>
<dbReference type="HOGENOM" id="CLU_082184_2_2_6"/>
<dbReference type="GO" id="GO:0022625">
    <property type="term" value="C:cytosolic large ribosomal subunit"/>
    <property type="evidence" value="ECO:0007669"/>
    <property type="project" value="TreeGrafter"/>
</dbReference>
<dbReference type="GO" id="GO:0003729">
    <property type="term" value="F:mRNA binding"/>
    <property type="evidence" value="ECO:0007669"/>
    <property type="project" value="TreeGrafter"/>
</dbReference>
<dbReference type="GO" id="GO:0003735">
    <property type="term" value="F:structural constituent of ribosome"/>
    <property type="evidence" value="ECO:0007669"/>
    <property type="project" value="InterPro"/>
</dbReference>
<dbReference type="GO" id="GO:0017148">
    <property type="term" value="P:negative regulation of translation"/>
    <property type="evidence" value="ECO:0007669"/>
    <property type="project" value="TreeGrafter"/>
</dbReference>
<dbReference type="GO" id="GO:0006412">
    <property type="term" value="P:translation"/>
    <property type="evidence" value="ECO:0007669"/>
    <property type="project" value="UniProtKB-UniRule"/>
</dbReference>
<dbReference type="CDD" id="cd00392">
    <property type="entry name" value="Ribosomal_L13"/>
    <property type="match status" value="1"/>
</dbReference>
<dbReference type="FunFam" id="3.90.1180.10:FF:000001">
    <property type="entry name" value="50S ribosomal protein L13"/>
    <property type="match status" value="1"/>
</dbReference>
<dbReference type="Gene3D" id="3.90.1180.10">
    <property type="entry name" value="Ribosomal protein L13"/>
    <property type="match status" value="1"/>
</dbReference>
<dbReference type="HAMAP" id="MF_01366">
    <property type="entry name" value="Ribosomal_uL13"/>
    <property type="match status" value="1"/>
</dbReference>
<dbReference type="InterPro" id="IPR005822">
    <property type="entry name" value="Ribosomal_uL13"/>
</dbReference>
<dbReference type="InterPro" id="IPR005823">
    <property type="entry name" value="Ribosomal_uL13_bac-type"/>
</dbReference>
<dbReference type="InterPro" id="IPR023563">
    <property type="entry name" value="Ribosomal_uL13_CS"/>
</dbReference>
<dbReference type="InterPro" id="IPR036899">
    <property type="entry name" value="Ribosomal_uL13_sf"/>
</dbReference>
<dbReference type="NCBIfam" id="TIGR01066">
    <property type="entry name" value="rplM_bact"/>
    <property type="match status" value="1"/>
</dbReference>
<dbReference type="PANTHER" id="PTHR11545:SF2">
    <property type="entry name" value="LARGE RIBOSOMAL SUBUNIT PROTEIN UL13M"/>
    <property type="match status" value="1"/>
</dbReference>
<dbReference type="PANTHER" id="PTHR11545">
    <property type="entry name" value="RIBOSOMAL PROTEIN L13"/>
    <property type="match status" value="1"/>
</dbReference>
<dbReference type="Pfam" id="PF00572">
    <property type="entry name" value="Ribosomal_L13"/>
    <property type="match status" value="1"/>
</dbReference>
<dbReference type="PIRSF" id="PIRSF002181">
    <property type="entry name" value="Ribosomal_L13"/>
    <property type="match status" value="1"/>
</dbReference>
<dbReference type="SUPFAM" id="SSF52161">
    <property type="entry name" value="Ribosomal protein L13"/>
    <property type="match status" value="1"/>
</dbReference>
<dbReference type="PROSITE" id="PS00783">
    <property type="entry name" value="RIBOSOMAL_L13"/>
    <property type="match status" value="1"/>
</dbReference>
<accession>A4Y3E1</accession>
<keyword id="KW-0687">Ribonucleoprotein</keyword>
<keyword id="KW-0689">Ribosomal protein</keyword>
<protein>
    <recommendedName>
        <fullName evidence="1">Large ribosomal subunit protein uL13</fullName>
    </recommendedName>
    <alternativeName>
        <fullName evidence="2">50S ribosomal protein L13</fullName>
    </alternativeName>
</protein>
<evidence type="ECO:0000255" key="1">
    <source>
        <dbReference type="HAMAP-Rule" id="MF_01366"/>
    </source>
</evidence>
<evidence type="ECO:0000305" key="2"/>
<proteinExistence type="inferred from homology"/>
<name>RL13_SHEPC</name>
<gene>
    <name evidence="1" type="primary">rplM</name>
    <name type="ordered locus">Sputcn32_0744</name>
</gene>
<comment type="function">
    <text evidence="1">This protein is one of the early assembly proteins of the 50S ribosomal subunit, although it is not seen to bind rRNA by itself. It is important during the early stages of 50S assembly.</text>
</comment>
<comment type="subunit">
    <text evidence="1">Part of the 50S ribosomal subunit.</text>
</comment>
<comment type="similarity">
    <text evidence="1">Belongs to the universal ribosomal protein uL13 family.</text>
</comment>
<reference key="1">
    <citation type="submission" date="2007-04" db="EMBL/GenBank/DDBJ databases">
        <title>Complete sequence of Shewanella putrefaciens CN-32.</title>
        <authorList>
            <consortium name="US DOE Joint Genome Institute"/>
            <person name="Copeland A."/>
            <person name="Lucas S."/>
            <person name="Lapidus A."/>
            <person name="Barry K."/>
            <person name="Detter J.C."/>
            <person name="Glavina del Rio T."/>
            <person name="Hammon N."/>
            <person name="Israni S."/>
            <person name="Dalin E."/>
            <person name="Tice H."/>
            <person name="Pitluck S."/>
            <person name="Chain P."/>
            <person name="Malfatti S."/>
            <person name="Shin M."/>
            <person name="Vergez L."/>
            <person name="Schmutz J."/>
            <person name="Larimer F."/>
            <person name="Land M."/>
            <person name="Hauser L."/>
            <person name="Kyrpides N."/>
            <person name="Mikhailova N."/>
            <person name="Romine M.F."/>
            <person name="Fredrickson J."/>
            <person name="Tiedje J."/>
            <person name="Richardson P."/>
        </authorList>
    </citation>
    <scope>NUCLEOTIDE SEQUENCE [LARGE SCALE GENOMIC DNA]</scope>
    <source>
        <strain>CN-32 / ATCC BAA-453</strain>
    </source>
</reference>
<organism>
    <name type="scientific">Shewanella putrefaciens (strain CN-32 / ATCC BAA-453)</name>
    <dbReference type="NCBI Taxonomy" id="319224"/>
    <lineage>
        <taxon>Bacteria</taxon>
        <taxon>Pseudomonadati</taxon>
        <taxon>Pseudomonadota</taxon>
        <taxon>Gammaproteobacteria</taxon>
        <taxon>Alteromonadales</taxon>
        <taxon>Shewanellaceae</taxon>
        <taxon>Shewanella</taxon>
    </lineage>
</organism>
<sequence>MKTFTATPETVTRDWFVVDADGKTLGRIATEIATRLRGKHKPEYTPHVDTGDYIIVINAEKVTVTGNKAKGKTYYSHSGFPGGIKQISFEKLQAHKPEMIIEKAVKGMLPKGPLGRAMFRKLKVYAGAEHNHAAQQPQVLDI</sequence>